<feature type="chain" id="PRO_0000414885" description="UDP-N-acetylglucosamine--peptide N-acetylglucosaminyltransferase GtfA subunit">
    <location>
        <begin position="1"/>
        <end position="504"/>
    </location>
</feature>
<feature type="binding site" evidence="1">
    <location>
        <begin position="16"/>
        <end position="19"/>
    </location>
    <ligand>
        <name>UDP</name>
        <dbReference type="ChEBI" id="CHEBI:58223"/>
    </ligand>
</feature>
<feature type="binding site" evidence="1">
    <location>
        <position position="243"/>
    </location>
    <ligand>
        <name>N-acetyl-D-glucosamine</name>
        <dbReference type="ChEBI" id="CHEBI:506227"/>
    </ligand>
</feature>
<feature type="binding site" evidence="1">
    <location>
        <begin position="385"/>
        <end position="386"/>
    </location>
    <ligand>
        <name>UDP</name>
        <dbReference type="ChEBI" id="CHEBI:58223"/>
    </ligand>
</feature>
<feature type="binding site" evidence="1">
    <location>
        <begin position="405"/>
        <end position="408"/>
    </location>
    <ligand>
        <name>N-acetyl-D-glucosamine</name>
        <dbReference type="ChEBI" id="CHEBI:506227"/>
    </ligand>
</feature>
<comment type="function">
    <text evidence="2 3 4">Required for polymorphic O-glycosylation of serine-rich repeat protein Fap1. Catalyzes the first step in glycosylation by transferring N-acetylglucosamine from UDP-GlcNAc to serine residues in Fap1. Part of the accessory SecA2/SecY2 system specifically required to export Fap1, a serine-rich fimbrial adhesin encoded upstream in the same operon. The GtfA-GtfB (Gtf1-Gtf2 in this bacteria) complex adds GlcNAc from UDP-GlcNAc to Fap1, attaching the first sugar residue. Cannot use not UDP-Glc as substrate. This subunit has very low glycosyltransferase activity; the GtfB stabilizing protein enhances membrane association, protease resistance and glycosyltransferase activity.</text>
</comment>
<comment type="catalytic activity">
    <reaction evidence="1">
        <text>L-seryl-[protein] + UDP-N-acetyl-alpha-D-glucosamine = 3-O-[N-acetyl-alpha-D-glucosaminyl]-L-seryl-[protein] + UDP + H(+)</text>
        <dbReference type="Rhea" id="RHEA:59872"/>
        <dbReference type="Rhea" id="RHEA-COMP:9863"/>
        <dbReference type="Rhea" id="RHEA-COMP:15471"/>
        <dbReference type="ChEBI" id="CHEBI:15378"/>
        <dbReference type="ChEBI" id="CHEBI:29999"/>
        <dbReference type="ChEBI" id="CHEBI:57705"/>
        <dbReference type="ChEBI" id="CHEBI:58223"/>
        <dbReference type="ChEBI" id="CHEBI:143279"/>
    </reaction>
</comment>
<comment type="pathway">
    <text evidence="1">Protein modification; protein glycosylation.</text>
</comment>
<comment type="subunit">
    <text evidence="3 4 5">Interacts with stabilizing protein GtfB (Gtf1), probably via the N-terminus of this protein; probably forms a heterotetramer with 2 subunits each of GtfA and GtfB. Part of the accessory SecA2/SecY2 protein translocation apparatus.</text>
</comment>
<comment type="interaction">
    <interactant intactId="EBI-6401548">
        <id>A1C3L9</id>
    </interactant>
    <interactant intactId="EBI-6401543">
        <id>A1C3M0</id>
        <label>gtfB</label>
    </interactant>
    <organismsDiffer>false</organismsDiffer>
    <experiments>6</experiments>
</comment>
<comment type="subcellular location">
    <subcellularLocation>
        <location evidence="1 5">Cytoplasm</location>
    </subcellularLocation>
    <subcellularLocation>
        <location evidence="1 5">Cell membrane</location>
        <topology evidence="1 8">Peripheral membrane protein</topology>
    </subcellularLocation>
    <text evidence="1 5">Cell membrane association requires GtfB (Gtf2), protein is more active and protected from trypsin (PubMed:21862581).</text>
</comment>
<comment type="disruption phenotype">
    <text evidence="2 3 5">No glycosylation of serine-rich fimbrial adhesin Fap1, an unglycosylated version of Fap1 accumulates that is larger than the wild-type protein. No further defect in a double gtfA/gtfB disruption mutant, but biofilm formation is further decreased than in a gtfB deletion.</text>
</comment>
<comment type="similarity">
    <text evidence="1 7">Belongs to the glycosyltransferase group 1 family. Glycosyltransferase 4 subfamily.</text>
</comment>
<gene>
    <name evidence="1" type="primary">gtfA</name>
    <name evidence="6" type="synonym">gtf1</name>
</gene>
<accession>A1C3L9</accession>
<name>GTFA_STRPA</name>
<reference key="1">
    <citation type="journal article" date="2007" name="J. Bacteriol.">
        <title>Two gene determinants are differentially involved in the biogenesis of Fap1 precursors in Streptococcus parasanguis.</title>
        <authorList>
            <person name="Wu H."/>
            <person name="Bu S."/>
            <person name="Newell P."/>
            <person name="Chen Q."/>
            <person name="Fives-Taylor P."/>
        </authorList>
    </citation>
    <scope>NUCLEOTIDE SEQUENCE [GENOMIC DNA]</scope>
    <scope>FUNCTION</scope>
    <scope>DISRUPTION PHENOTYPE</scope>
    <source>
        <strain>FW213</strain>
    </source>
</reference>
<reference key="2">
    <citation type="journal article" date="2010" name="Appl. Environ. Microbiol.">
        <title>Purification and characterization of an active N-acetylglucosaminyltransferase enzyme complex from Streptococci.</title>
        <authorList>
            <person name="Wu R."/>
            <person name="Zhou M."/>
            <person name="Wu H."/>
        </authorList>
    </citation>
    <scope>PROTEIN SEQUENCE OF 82-94; 149-166; 186-193; 214-250; 273-282; 285-313; 350-365 AND 374-383</scope>
    <scope>FUNCTION AS A GLYCOSYLTRANSFERASE</scope>
    <scope>CATALYTIC ACTIVITY</scope>
    <scope>SUBUNIT</scope>
    <source>
        <strain>FW213</strain>
    </source>
</reference>
<reference key="3">
    <citation type="journal article" date="2008" name="J. Bacteriol.">
        <title>Interaction between two putative glycosyltransferases is required for glycosylation of a serine-rich streptococcal adhesin.</title>
        <authorList>
            <person name="Bu S."/>
            <person name="Li Y."/>
            <person name="Zhou M."/>
            <person name="Azadin P."/>
            <person name="Zeng M."/>
            <person name="Fives-Taylor P."/>
            <person name="Wu H."/>
        </authorList>
    </citation>
    <scope>FUNCTION IN GLYCOSYLATION OF FAP1</scope>
    <scope>INTERACTION WITH GTFB</scope>
    <scope>DISRUPTION PHENOTYPE</scope>
    <source>
        <strain>FW213</strain>
    </source>
</reference>
<reference key="4">
    <citation type="journal article" date="2011" name="J. Biol. Chem.">
        <title>A molecular chaperone mediates a two-protein enzyme complex and glycosylation of serine-rich streptococcal adhesins.</title>
        <authorList>
            <person name="Wu R."/>
            <person name="Wu H."/>
        </authorList>
    </citation>
    <scope>STABILIZATION BY GTFB (GTF2)</scope>
    <scope>INTERACTION WITH GTFB</scope>
    <scope>SUBCELLULAR LOCATION</scope>
    <scope>DISRUPTION PHENOTYPE</scope>
    <source>
        <strain>FW213</strain>
    </source>
</reference>
<organism>
    <name type="scientific">Streptococcus parasanguinis</name>
    <dbReference type="NCBI Taxonomy" id="1318"/>
    <lineage>
        <taxon>Bacteria</taxon>
        <taxon>Bacillati</taxon>
        <taxon>Bacillota</taxon>
        <taxon>Bacilli</taxon>
        <taxon>Lactobacillales</taxon>
        <taxon>Streptococcaceae</taxon>
        <taxon>Streptococcus</taxon>
    </lineage>
</organism>
<dbReference type="EC" id="2.4.1.-" evidence="1 4"/>
<dbReference type="EMBL" id="DQ990875">
    <property type="protein sequence ID" value="ABL74004.1"/>
    <property type="molecule type" value="Genomic_DNA"/>
</dbReference>
<dbReference type="RefSeq" id="WP_014713989.1">
    <property type="nucleotide sequence ID" value="NZ_JYPA01000019.1"/>
</dbReference>
<dbReference type="SMR" id="A1C3L9"/>
<dbReference type="IntAct" id="A1C3L9">
    <property type="interactions" value="1"/>
</dbReference>
<dbReference type="CAZy" id="GT4">
    <property type="family name" value="Glycosyltransferase Family 4"/>
</dbReference>
<dbReference type="UniPathway" id="UPA00378"/>
<dbReference type="GO" id="GO:0005737">
    <property type="term" value="C:cytoplasm"/>
    <property type="evidence" value="ECO:0007669"/>
    <property type="project" value="UniProtKB-SubCell"/>
</dbReference>
<dbReference type="GO" id="GO:0005886">
    <property type="term" value="C:plasma membrane"/>
    <property type="evidence" value="ECO:0007669"/>
    <property type="project" value="UniProtKB-SubCell"/>
</dbReference>
<dbReference type="GO" id="GO:0017122">
    <property type="term" value="C:protein N-acetylglucosaminyltransferase complex"/>
    <property type="evidence" value="ECO:0000314"/>
    <property type="project" value="CACAO"/>
</dbReference>
<dbReference type="GO" id="GO:0016757">
    <property type="term" value="F:glycosyltransferase activity"/>
    <property type="evidence" value="ECO:0000314"/>
    <property type="project" value="UniProtKB"/>
</dbReference>
<dbReference type="GO" id="GO:0000166">
    <property type="term" value="F:nucleotide binding"/>
    <property type="evidence" value="ECO:0007669"/>
    <property type="project" value="UniProtKB-KW"/>
</dbReference>
<dbReference type="GO" id="GO:0018242">
    <property type="term" value="P:protein O-linked glycosylation via serine"/>
    <property type="evidence" value="ECO:0007669"/>
    <property type="project" value="UniProtKB-UniRule"/>
</dbReference>
<dbReference type="CDD" id="cd04949">
    <property type="entry name" value="GT4_GtfA-like"/>
    <property type="match status" value="1"/>
</dbReference>
<dbReference type="FunFam" id="3.40.50.2000:FF:000196">
    <property type="entry name" value="UDP-N-acetylglucosamine--peptide N-acetylglucosaminyltransferase GtfA subunit"/>
    <property type="match status" value="1"/>
</dbReference>
<dbReference type="Gene3D" id="3.40.50.2000">
    <property type="entry name" value="Glycogen Phosphorylase B"/>
    <property type="match status" value="2"/>
</dbReference>
<dbReference type="HAMAP" id="MF_01472">
    <property type="entry name" value="GtfA"/>
    <property type="match status" value="1"/>
</dbReference>
<dbReference type="InterPro" id="IPR001296">
    <property type="entry name" value="Glyco_trans_1"/>
</dbReference>
<dbReference type="InterPro" id="IPR014267">
    <property type="entry name" value="GtfA"/>
</dbReference>
<dbReference type="InterPro" id="IPR054396">
    <property type="entry name" value="GtfA_EBD"/>
</dbReference>
<dbReference type="NCBIfam" id="TIGR02918">
    <property type="entry name" value="accessory Sec system glycosyltransferase GtfA"/>
    <property type="match status" value="1"/>
</dbReference>
<dbReference type="PANTHER" id="PTHR12526">
    <property type="entry name" value="GLYCOSYLTRANSFERASE"/>
    <property type="match status" value="1"/>
</dbReference>
<dbReference type="PANTHER" id="PTHR12526:SF629">
    <property type="entry name" value="TEICHURONIC ACID BIOSYNTHESIS GLYCOSYLTRANSFERASE TUAH-RELATED"/>
    <property type="match status" value="1"/>
</dbReference>
<dbReference type="Pfam" id="PF00534">
    <property type="entry name" value="Glycos_transf_1"/>
    <property type="match status" value="1"/>
</dbReference>
<dbReference type="Pfam" id="PF22145">
    <property type="entry name" value="GtfA_EBD"/>
    <property type="match status" value="1"/>
</dbReference>
<dbReference type="SUPFAM" id="SSF53756">
    <property type="entry name" value="UDP-Glycosyltransferase/glycogen phosphorylase"/>
    <property type="match status" value="1"/>
</dbReference>
<protein>
    <recommendedName>
        <fullName evidence="1">UDP-N-acetylglucosamine--peptide N-acetylglucosaminyltransferase GtfA subunit</fullName>
        <ecNumber evidence="1 4">2.4.1.-</ecNumber>
    </recommendedName>
    <alternativeName>
        <fullName evidence="6">Glycosyltransferase Gtf1</fullName>
    </alternativeName>
    <alternativeName>
        <fullName evidence="1">Glycosyltransferase GtfA</fullName>
    </alternativeName>
</protein>
<evidence type="ECO:0000255" key="1">
    <source>
        <dbReference type="HAMAP-Rule" id="MF_01472"/>
    </source>
</evidence>
<evidence type="ECO:0000269" key="2">
    <source>
    </source>
</evidence>
<evidence type="ECO:0000269" key="3">
    <source>
    </source>
</evidence>
<evidence type="ECO:0000269" key="4">
    <source>
    </source>
</evidence>
<evidence type="ECO:0000269" key="5">
    <source>
    </source>
</evidence>
<evidence type="ECO:0000303" key="6">
    <source>
    </source>
</evidence>
<evidence type="ECO:0000305" key="7"/>
<evidence type="ECO:0000305" key="8">
    <source>
    </source>
</evidence>
<proteinExistence type="evidence at protein level"/>
<keyword id="KW-1003">Cell membrane</keyword>
<keyword id="KW-0963">Cytoplasm</keyword>
<keyword id="KW-0903">Direct protein sequencing</keyword>
<keyword id="KW-0328">Glycosyltransferase</keyword>
<keyword id="KW-0472">Membrane</keyword>
<keyword id="KW-0547">Nucleotide-binding</keyword>
<keyword id="KW-0808">Transferase</keyword>
<sequence>MTIYNINLGIGWASSGVEYAQAYRAQILRSLGMPAKFIFTNMFQSENLEHFTKNIGFEDNEIIWLYGYFTDVKISGTTYKKDDLEATFSQCPTKKEASSDRKLIRYYFENQELYINASLYGENQEYVQRVEYVVKGKLIRKDYYSYTKVFSEFYSPGENGVQLCNRSFYNEDGSIAYEEILSNEKSTFVFSNKICYGLEELLEFMLEDLSLTKSDLILLDRATGIGQVVFENIGAAKLAVVIHAEHFNEKNTDEHNILWNNYYEYQFTNADKVNAFITSTERQKILLEEQFTQYTSLHPKIVAIPVGSLDQLKFPEQSRKSFSMMTGSRLAIEKHIDWLIEGVALAQKRLPELTFDIYGEGGERRKLTELLTKLHAGEFIELKGHKQLDEIYQNYELYLTASTSEGFGLTLMEAVGSGLPIIGFDVPYGNQTFVCSGENGLLIERPKGDDRSRIVQAFADSIYEYFTKFKMADAQQYSYNIAENYKHEKLVERWKDFIEEMLND</sequence>